<evidence type="ECO:0000250" key="1"/>
<evidence type="ECO:0000255" key="2">
    <source>
        <dbReference type="PROSITE-ProRule" id="PRU10023"/>
    </source>
</evidence>
<evidence type="ECO:0000305" key="3"/>
<protein>
    <recommendedName>
        <fullName>Stilbene synthase 2</fullName>
        <ecNumber>2.3.1.95</ecNumber>
    </recommendedName>
    <alternativeName>
        <fullName>PSV21</fullName>
    </alternativeName>
    <alternativeName>
        <fullName>Resveratrol synthase 2</fullName>
    </alternativeName>
    <alternativeName>
        <fullName>Trihydroxystilbene synthase 2</fullName>
        <shortName>StSy 2</shortName>
    </alternativeName>
</protein>
<name>THS2_VITVI</name>
<accession>P51070</accession>
<accession>A5BBF1</accession>
<keyword id="KW-0012">Acyltransferase</keyword>
<keyword id="KW-0963">Cytoplasm</keyword>
<keyword id="KW-0611">Plant defense</keyword>
<keyword id="KW-0346">Stress response</keyword>
<keyword id="KW-0808">Transferase</keyword>
<gene>
    <name type="ORF">GSVIVT00004047001</name>
    <name type="ORF">LOC100246143</name>
    <name type="ORF">VITISV_010833</name>
</gene>
<gene>
    <name type="ORF">GSVIVT00008253001</name>
    <name type="ORF">LOC100259169</name>
    <name type="ORF">VITISV_024260</name>
</gene>
<organism>
    <name type="scientific">Vitis vinifera</name>
    <name type="common">Grape</name>
    <dbReference type="NCBI Taxonomy" id="29760"/>
    <lineage>
        <taxon>Eukaryota</taxon>
        <taxon>Viridiplantae</taxon>
        <taxon>Streptophyta</taxon>
        <taxon>Embryophyta</taxon>
        <taxon>Tracheophyta</taxon>
        <taxon>Spermatophyta</taxon>
        <taxon>Magnoliopsida</taxon>
        <taxon>eudicotyledons</taxon>
        <taxon>Gunneridae</taxon>
        <taxon>Pentapetalae</taxon>
        <taxon>rosids</taxon>
        <taxon>Vitales</taxon>
        <taxon>Vitaceae</taxon>
        <taxon>Viteae</taxon>
        <taxon>Vitis</taxon>
    </lineage>
</organism>
<dbReference type="EC" id="2.3.1.95"/>
<dbReference type="EMBL" id="S63221">
    <property type="protein sequence ID" value="AAB19887.2"/>
    <property type="molecule type" value="mRNA"/>
</dbReference>
<dbReference type="EMBL" id="X76892">
    <property type="protein sequence ID" value="CAA54221.1"/>
    <property type="molecule type" value="mRNA"/>
</dbReference>
<dbReference type="EMBL" id="AM453354">
    <property type="protein sequence ID" value="CAN69968.1"/>
    <property type="molecule type" value="Genomic_DNA"/>
</dbReference>
<dbReference type="EMBL" id="AM463938">
    <property type="protein sequence ID" value="CAN68069.1"/>
    <property type="molecule type" value="Genomic_DNA"/>
</dbReference>
<dbReference type="RefSeq" id="XP_002268842.2">
    <property type="nucleotide sequence ID" value="XM_002268806.4"/>
</dbReference>
<dbReference type="RefSeq" id="XP_003634068.1">
    <property type="nucleotide sequence ID" value="XM_003634020.3"/>
</dbReference>
<dbReference type="RefSeq" id="XP_019081580.1">
    <property type="nucleotide sequence ID" value="XM_019226035.1"/>
</dbReference>
<dbReference type="SMR" id="P51070"/>
<dbReference type="PaxDb" id="29760-VIT_16s0100g01010.t01"/>
<dbReference type="KEGG" id="vvi:100853406"/>
<dbReference type="KEGG" id="vvi:100855299"/>
<dbReference type="eggNOG" id="ENOG502QRSY">
    <property type="taxonomic scope" value="Eukaryota"/>
</dbReference>
<dbReference type="HOGENOM" id="CLU_034992_2_0_1"/>
<dbReference type="OrthoDB" id="1538623at2759"/>
<dbReference type="UniPathway" id="UPA00372">
    <property type="reaction ID" value="UER00548"/>
</dbReference>
<dbReference type="ExpressionAtlas" id="P51070">
    <property type="expression patterns" value="baseline and differential"/>
</dbReference>
<dbReference type="GO" id="GO:0005737">
    <property type="term" value="C:cytoplasm"/>
    <property type="evidence" value="ECO:0007669"/>
    <property type="project" value="UniProtKB-SubCell"/>
</dbReference>
<dbReference type="GO" id="GO:0050350">
    <property type="term" value="F:trihydroxystilbene synthase activity"/>
    <property type="evidence" value="ECO:0007669"/>
    <property type="project" value="UniProtKB-EC"/>
</dbReference>
<dbReference type="GO" id="GO:0009058">
    <property type="term" value="P:biosynthetic process"/>
    <property type="evidence" value="ECO:0007669"/>
    <property type="project" value="InterPro"/>
</dbReference>
<dbReference type="GO" id="GO:0006952">
    <property type="term" value="P:defense response"/>
    <property type="evidence" value="ECO:0007669"/>
    <property type="project" value="UniProtKB-KW"/>
</dbReference>
<dbReference type="CDD" id="cd00831">
    <property type="entry name" value="CHS_like"/>
    <property type="match status" value="1"/>
</dbReference>
<dbReference type="FunFam" id="3.40.47.10:FF:000014">
    <property type="entry name" value="Chalcone synthase 1"/>
    <property type="match status" value="1"/>
</dbReference>
<dbReference type="FunFam" id="3.40.47.10:FF:000025">
    <property type="entry name" value="Chalcone synthase 2"/>
    <property type="match status" value="1"/>
</dbReference>
<dbReference type="Gene3D" id="3.40.47.10">
    <property type="match status" value="2"/>
</dbReference>
<dbReference type="InterPro" id="IPR012328">
    <property type="entry name" value="Chalcone/stilbene_synt_C"/>
</dbReference>
<dbReference type="InterPro" id="IPR001099">
    <property type="entry name" value="Chalcone/stilbene_synt_N"/>
</dbReference>
<dbReference type="InterPro" id="IPR018088">
    <property type="entry name" value="Chalcone/stilbene_synthase_AS"/>
</dbReference>
<dbReference type="InterPro" id="IPR011141">
    <property type="entry name" value="Polyketide_synthase_type-III"/>
</dbReference>
<dbReference type="InterPro" id="IPR016039">
    <property type="entry name" value="Thiolase-like"/>
</dbReference>
<dbReference type="PANTHER" id="PTHR11877:SF14">
    <property type="entry name" value="CHALCONE SYNTHASE"/>
    <property type="match status" value="1"/>
</dbReference>
<dbReference type="PANTHER" id="PTHR11877">
    <property type="entry name" value="HYDROXYMETHYLGLUTARYL-COA SYNTHASE"/>
    <property type="match status" value="1"/>
</dbReference>
<dbReference type="Pfam" id="PF02797">
    <property type="entry name" value="Chal_sti_synt_C"/>
    <property type="match status" value="1"/>
</dbReference>
<dbReference type="Pfam" id="PF00195">
    <property type="entry name" value="Chal_sti_synt_N"/>
    <property type="match status" value="1"/>
</dbReference>
<dbReference type="PIRSF" id="PIRSF000451">
    <property type="entry name" value="PKS_III"/>
    <property type="match status" value="1"/>
</dbReference>
<dbReference type="SUPFAM" id="SSF53901">
    <property type="entry name" value="Thiolase-like"/>
    <property type="match status" value="2"/>
</dbReference>
<dbReference type="PROSITE" id="PS00441">
    <property type="entry name" value="CHALCONE_SYNTH"/>
    <property type="match status" value="1"/>
</dbReference>
<reference key="1">
    <citation type="journal article" date="1991" name="Arch. Biochem. Biophys.">
        <title>Coordinate- and elicitor-dependent expression of stilbene synthase and phenylalanine ammonia-lyase genes in Vitis cv. Optima.</title>
        <authorList>
            <person name="Melchior F."/>
            <person name="Kindl H."/>
        </authorList>
    </citation>
    <scope>NUCLEOTIDE SEQUENCE [MRNA]</scope>
    <source>
        <strain>cv. Optima</strain>
    </source>
</reference>
<reference key="2">
    <citation type="journal article" date="1994" name="Plant Mol. Biol.">
        <title>Cloning and molecular analysis of structural genes involved in flavonoid and stilbene biosynthesis in grape (Vitis vinifera L.).</title>
        <authorList>
            <person name="Sparvoli F."/>
            <person name="Martin C."/>
            <person name="Scienza A."/>
            <person name="Gavazzi G."/>
            <person name="Tonelli C."/>
        </authorList>
    </citation>
    <scope>NUCLEOTIDE SEQUENCE [MRNA]</scope>
    <source>
        <strain>cv. Lambrusco Foglia Frastagliata</strain>
    </source>
</reference>
<reference key="3">
    <citation type="journal article" date="2007" name="Nature">
        <title>The grapevine genome sequence suggests ancestral hexaploidization in major angiosperm phyla.</title>
        <authorList>
            <person name="Jaillon O."/>
            <person name="Aury J.-M."/>
            <person name="Noel B."/>
            <person name="Policriti A."/>
            <person name="Clepet C."/>
            <person name="Casagrande A."/>
            <person name="Choisne N."/>
            <person name="Aubourg S."/>
            <person name="Vitulo N."/>
            <person name="Jubin C."/>
            <person name="Vezzi A."/>
            <person name="Legeai F."/>
            <person name="Hugueney P."/>
            <person name="Dasilva C."/>
            <person name="Horner D."/>
            <person name="Mica E."/>
            <person name="Jublot D."/>
            <person name="Poulain J."/>
            <person name="Bruyere C."/>
            <person name="Billault A."/>
            <person name="Segurens B."/>
            <person name="Gouyvenoux M."/>
            <person name="Ugarte E."/>
            <person name="Cattonaro F."/>
            <person name="Anthouard V."/>
            <person name="Vico V."/>
            <person name="Del Fabbro C."/>
            <person name="Alaux M."/>
            <person name="Di Gaspero G."/>
            <person name="Dumas V."/>
            <person name="Felice N."/>
            <person name="Paillard S."/>
            <person name="Juman I."/>
            <person name="Moroldo M."/>
            <person name="Scalabrin S."/>
            <person name="Canaguier A."/>
            <person name="Le Clainche I."/>
            <person name="Malacrida G."/>
            <person name="Durand E."/>
            <person name="Pesole G."/>
            <person name="Laucou V."/>
            <person name="Chatelet P."/>
            <person name="Merdinoglu D."/>
            <person name="Delledonne M."/>
            <person name="Pezzotti M."/>
            <person name="Lecharny A."/>
            <person name="Scarpelli C."/>
            <person name="Artiguenave F."/>
            <person name="Pe M.E."/>
            <person name="Valle G."/>
            <person name="Morgante M."/>
            <person name="Caboche M."/>
            <person name="Adam-Blondon A.-F."/>
            <person name="Weissenbach J."/>
            <person name="Quetier F."/>
            <person name="Wincker P."/>
        </authorList>
    </citation>
    <scope>NUCLEOTIDE SEQUENCE [LARGE SCALE GENOMIC DNA]</scope>
    <source>
        <strain>cv. Pinot noir / PN40024</strain>
    </source>
</reference>
<reference key="4">
    <citation type="journal article" date="2007" name="PLoS ONE">
        <title>A high quality draft consensus sequence of the genome of a heterozygous grapevine variety.</title>
        <authorList>
            <person name="Velasco R."/>
            <person name="Zharkikh A."/>
            <person name="Troggio M."/>
            <person name="Cartwright D.A."/>
            <person name="Cestaro A."/>
            <person name="Pruss D."/>
            <person name="Pindo M."/>
            <person name="FitzGerald L.M."/>
            <person name="Vezzulli S."/>
            <person name="Reid J."/>
            <person name="Malacarne G."/>
            <person name="Iliev D."/>
            <person name="Coppola G."/>
            <person name="Wardell B."/>
            <person name="Micheletti D."/>
            <person name="Macalma T."/>
            <person name="Facci M."/>
            <person name="Mitchell J.T."/>
            <person name="Perazzolli M."/>
            <person name="Eldredge G."/>
            <person name="Gatto P."/>
            <person name="Oyzerski R."/>
            <person name="Moretto M."/>
            <person name="Gutin N."/>
            <person name="Stefanini M."/>
            <person name="Chen Y."/>
            <person name="Segala C."/>
            <person name="Davenport C."/>
            <person name="Dematte L."/>
            <person name="Mraz A."/>
            <person name="Battilana J."/>
            <person name="Stormo K."/>
            <person name="Costa F."/>
            <person name="Tao Q."/>
            <person name="Si-Ammour A."/>
            <person name="Harkins T."/>
            <person name="Lackey A."/>
            <person name="Perbost C."/>
            <person name="Taillon B."/>
            <person name="Stella A."/>
            <person name="Solovyev V."/>
            <person name="Fawcett J.A."/>
            <person name="Sterck L."/>
            <person name="Vandepoele K."/>
            <person name="Grando S.M."/>
            <person name="Toppo S."/>
            <person name="Moser C."/>
            <person name="Lanchbury J."/>
            <person name="Bogden R."/>
            <person name="Skolnick M."/>
            <person name="Sgaramella V."/>
            <person name="Bhatnagar S.K."/>
            <person name="Fontana P."/>
            <person name="Gutin A."/>
            <person name="Van de Peer Y."/>
            <person name="Salamini F."/>
            <person name="Viola R."/>
        </authorList>
    </citation>
    <scope>NUCLEOTIDE SEQUENCE [LARGE SCALE GENOMIC DNA]</scope>
    <source>
        <strain>cv. Pinot noir</strain>
    </source>
</reference>
<comment type="function">
    <text evidence="1">Mediates resistance to pathogens which are sensitive to stilbenes.</text>
</comment>
<comment type="catalytic activity">
    <reaction>
        <text>4-coumaroyl-CoA + 3 malonyl-CoA + 3 H(+) = trans-resveratrol + 4 CO2 + 4 CoA</text>
        <dbReference type="Rhea" id="RHEA:11936"/>
        <dbReference type="ChEBI" id="CHEBI:15378"/>
        <dbReference type="ChEBI" id="CHEBI:16526"/>
        <dbReference type="ChEBI" id="CHEBI:45713"/>
        <dbReference type="ChEBI" id="CHEBI:57287"/>
        <dbReference type="ChEBI" id="CHEBI:57355"/>
        <dbReference type="ChEBI" id="CHEBI:57384"/>
        <dbReference type="EC" id="2.3.1.95"/>
    </reaction>
</comment>
<comment type="pathway">
    <text>Phytoalexin biosynthesis; 3,4',5-trihydroxystilbene biosynthesis; 3,4',5-trihydroxystilbene from trans-4-coumarate: step 2/2.</text>
</comment>
<comment type="subunit">
    <text evidence="1">Homodimer.</text>
</comment>
<comment type="subcellular location">
    <subcellularLocation>
        <location>Cytoplasm</location>
    </subcellularLocation>
</comment>
<comment type="induction">
    <text>By stress.</text>
</comment>
<comment type="similarity">
    <text evidence="3">Belongs to the thiolase-like superfamily. Chalcone/stilbene synthases family.</text>
</comment>
<proteinExistence type="evidence at transcript level"/>
<sequence>MASVEEIRNAQRAKGPATILAIGTATPDHCVYQSDYADYYFRVTKSEHMTALKKKFNRICDKSMIKKRYIHLTEEMLEEHPNIGAYMAPSLNIRQEIITAEVPKLGKEAALKALKEWGQPKSKITHLVFCTTSGVEMPGADYKLANLLGLEPSVRRVMLYHQGCYAGGTVLRTAKDLAENNAGARVLVVCSEITVVTFRGPSEDALDSLVGQALFGDGSAAVIVGSDPDISIERPLFQLVSAAQTFIPNSAGAIAGNLREVGLTFHLWPNVPTLISENIEKCLTQAFDPLGISDWNSLFWIAHPGGPAILDAVEAKLNLDKKKLEATRHVLSEYGNMSSACVLFILDEMRKKSLKGERATTGEGLDWGVLFGFGPGLTIETVVLHSIPMVTN</sequence>
<feature type="chain" id="PRO_0000216083" description="Stilbene synthase 2">
    <location>
        <begin position="1"/>
        <end position="392"/>
    </location>
</feature>
<feature type="active site" evidence="2">
    <location>
        <position position="164"/>
    </location>
</feature>
<feature type="binding site" evidence="1">
    <location>
        <begin position="55"/>
        <end position="58"/>
    </location>
    <ligand>
        <name>substrate</name>
    </ligand>
</feature>
<feature type="binding site" evidence="1">
    <location>
        <position position="267"/>
    </location>
    <ligand>
        <name>substrate</name>
    </ligand>
</feature>
<feature type="binding site" evidence="1">
    <location>
        <begin position="305"/>
        <end position="307"/>
    </location>
    <ligand>
        <name>substrate</name>
    </ligand>
</feature>
<feature type="sequence conflict" description="In Ref. 2; CAA54221." evidence="3" ref="2">
    <original>Y</original>
    <variation>F</variation>
    <location>
        <position position="39"/>
    </location>
</feature>
<feature type="sequence conflict" description="In Ref. 1; AAB19887." evidence="3" ref="1">
    <original>YH</original>
    <variation>DQ</variation>
    <location>
        <begin position="160"/>
        <end position="161"/>
    </location>
</feature>
<feature type="sequence conflict" description="In Ref. 1; AAB19887." evidence="3" ref="1">
    <original>I</original>
    <variation>S</variation>
    <location>
        <position position="193"/>
    </location>
</feature>